<name>KKA3_ENTFL</name>
<comment type="function">
    <text>Resistance to kanamycin and structurally-related aminoglycosides, including amikacin.</text>
</comment>
<comment type="catalytic activity">
    <reaction>
        <text>kanamycin A + ATP = kanamycin 3'-phosphate + ADP + H(+)</text>
        <dbReference type="Rhea" id="RHEA:24256"/>
        <dbReference type="ChEBI" id="CHEBI:15378"/>
        <dbReference type="ChEBI" id="CHEBI:30616"/>
        <dbReference type="ChEBI" id="CHEBI:57909"/>
        <dbReference type="ChEBI" id="CHEBI:58214"/>
        <dbReference type="ChEBI" id="CHEBI:456216"/>
        <dbReference type="EC" id="2.7.1.95"/>
    </reaction>
</comment>
<comment type="similarity">
    <text evidence="2">Belongs to the aminoglycoside phosphotransferase family.</text>
</comment>
<accession>P0A3Y5</accession>
<accession>P00554</accession>
<protein>
    <recommendedName>
        <fullName>Aminoglycoside 3'-phosphotransferase</fullName>
        <ecNumber>2.7.1.95</ecNumber>
    </recommendedName>
    <alternativeName>
        <fullName>APH(3')III</fullName>
    </alternativeName>
    <alternativeName>
        <fullName>Kanamycin kinase, type III</fullName>
    </alternativeName>
    <alternativeName>
        <fullName>Neomycin-kanamycin phosphotransferase type III</fullName>
    </alternativeName>
</protein>
<geneLocation type="plasmid">
    <name>pJH1</name>
</geneLocation>
<gene>
    <name type="primary">aphA</name>
</gene>
<dbReference type="EC" id="2.7.1.95"/>
<dbReference type="EMBL" id="V01547">
    <property type="protein sequence ID" value="CAA24789.1"/>
    <property type="molecule type" value="Genomic_DNA"/>
</dbReference>
<dbReference type="EMBL" id="X99398">
    <property type="protein sequence ID" value="CAA67773.1"/>
    <property type="molecule type" value="Genomic_DNA"/>
</dbReference>
<dbReference type="PIR" id="A00665">
    <property type="entry name" value="PKSOJF"/>
</dbReference>
<dbReference type="RefSeq" id="YP_783930.1">
    <property type="nucleotide sequence ID" value="NC_008445.1"/>
</dbReference>
<dbReference type="PDB" id="1J7I">
    <property type="method" value="X-ray"/>
    <property type="resolution" value="3.20 A"/>
    <property type="chains" value="A=1-264"/>
</dbReference>
<dbReference type="PDB" id="1J7L">
    <property type="method" value="X-ray"/>
    <property type="resolution" value="2.20 A"/>
    <property type="chains" value="A/B=1-264"/>
</dbReference>
<dbReference type="PDB" id="1J7U">
    <property type="method" value="X-ray"/>
    <property type="resolution" value="2.40 A"/>
    <property type="chains" value="A/B=1-264"/>
</dbReference>
<dbReference type="PDB" id="1L8T">
    <property type="method" value="X-ray"/>
    <property type="resolution" value="2.40 A"/>
    <property type="chains" value="A=2-264"/>
</dbReference>
<dbReference type="PDB" id="2B0Q">
    <property type="method" value="X-ray"/>
    <property type="resolution" value="2.70 A"/>
    <property type="chains" value="A=2-264"/>
</dbReference>
<dbReference type="PDB" id="2BKK">
    <property type="method" value="X-ray"/>
    <property type="resolution" value="2.15 A"/>
    <property type="chains" value="A/C=1-264"/>
</dbReference>
<dbReference type="PDB" id="3Q2J">
    <property type="method" value="X-ray"/>
    <property type="resolution" value="2.15 A"/>
    <property type="chains" value="A/B=1-264"/>
</dbReference>
<dbReference type="PDB" id="3TM0">
    <property type="method" value="X-ray"/>
    <property type="resolution" value="2.10 A"/>
    <property type="chains" value="A=2-264"/>
</dbReference>
<dbReference type="PDBsum" id="1J7I"/>
<dbReference type="PDBsum" id="1J7L"/>
<dbReference type="PDBsum" id="1J7U"/>
<dbReference type="PDBsum" id="1L8T"/>
<dbReference type="PDBsum" id="2B0Q"/>
<dbReference type="PDBsum" id="2BKK"/>
<dbReference type="PDBsum" id="3Q2J"/>
<dbReference type="PDBsum" id="3TM0"/>
<dbReference type="BMRB" id="P0A3Y5"/>
<dbReference type="SMR" id="P0A3Y5"/>
<dbReference type="DrugBank" id="DB04395">
    <property type="generic name" value="Phosphoaminophosphonic Acid-Adenylate Ester"/>
</dbReference>
<dbReference type="CARD" id="ARO:3002647">
    <property type="molecule name" value="APH(3')-IIIa"/>
    <property type="mechanism identifier" value="ARO:0001004"/>
    <property type="mechanism name" value="antibiotic inactivation"/>
</dbReference>
<dbReference type="KEGG" id="ag:CAA24789"/>
<dbReference type="BRENDA" id="2.7.1.95">
    <property type="organism ID" value="2095"/>
</dbReference>
<dbReference type="SABIO-RK" id="P0A3Y5"/>
<dbReference type="EvolutionaryTrace" id="P0A3Y5"/>
<dbReference type="PRO" id="PR:P0A3Y5"/>
<dbReference type="GO" id="GO:0005524">
    <property type="term" value="F:ATP binding"/>
    <property type="evidence" value="ECO:0007669"/>
    <property type="project" value="UniProtKB-KW"/>
</dbReference>
<dbReference type="GO" id="GO:0008910">
    <property type="term" value="F:kanamycin kinase activity"/>
    <property type="evidence" value="ECO:0007669"/>
    <property type="project" value="UniProtKB-EC"/>
</dbReference>
<dbReference type="GO" id="GO:0046677">
    <property type="term" value="P:response to antibiotic"/>
    <property type="evidence" value="ECO:0007669"/>
    <property type="project" value="UniProtKB-KW"/>
</dbReference>
<dbReference type="CDD" id="cd05150">
    <property type="entry name" value="APH"/>
    <property type="match status" value="1"/>
</dbReference>
<dbReference type="Gene3D" id="3.90.1200.10">
    <property type="match status" value="1"/>
</dbReference>
<dbReference type="Gene3D" id="3.30.200.20">
    <property type="entry name" value="Phosphorylase Kinase, domain 1"/>
    <property type="match status" value="1"/>
</dbReference>
<dbReference type="InterPro" id="IPR051678">
    <property type="entry name" value="AGP_Transferase"/>
</dbReference>
<dbReference type="InterPro" id="IPR002575">
    <property type="entry name" value="Aminoglycoside_PTrfase"/>
</dbReference>
<dbReference type="InterPro" id="IPR024165">
    <property type="entry name" value="Kan/Strep_kinase"/>
</dbReference>
<dbReference type="InterPro" id="IPR011009">
    <property type="entry name" value="Kinase-like_dom_sf"/>
</dbReference>
<dbReference type="NCBIfam" id="NF033068">
    <property type="entry name" value="APH_3p"/>
    <property type="match status" value="1"/>
</dbReference>
<dbReference type="NCBIfam" id="NF033064">
    <property type="entry name" value="APH_3p_IIIa"/>
    <property type="match status" value="1"/>
</dbReference>
<dbReference type="PANTHER" id="PTHR21310:SF41">
    <property type="entry name" value="3'-PHOSPHOTRANSFERASE, PUTATIVE-RELATED"/>
    <property type="match status" value="1"/>
</dbReference>
<dbReference type="PANTHER" id="PTHR21310">
    <property type="entry name" value="AMINOGLYCOSIDE PHOSPHOTRANSFERASE-RELATED-RELATED"/>
    <property type="match status" value="1"/>
</dbReference>
<dbReference type="Pfam" id="PF01636">
    <property type="entry name" value="APH"/>
    <property type="match status" value="1"/>
</dbReference>
<dbReference type="PIRSF" id="PIRSF000706">
    <property type="entry name" value="Kanamycin_kin"/>
    <property type="match status" value="1"/>
</dbReference>
<dbReference type="SUPFAM" id="SSF56112">
    <property type="entry name" value="Protein kinase-like (PK-like)"/>
    <property type="match status" value="1"/>
</dbReference>
<reference key="1">
    <citation type="journal article" date="1983" name="Gene">
        <title>Nucleotide sequence of the Streptococcus faecalis plasmid gene encoding the 3'5'-aminoglycoside phosphotransferase type III.</title>
        <authorList>
            <person name="Trieu-Cuot P."/>
            <person name="Courvalin P."/>
        </authorList>
    </citation>
    <scope>NUCLEOTIDE SEQUENCE [GENOMIC DNA]</scope>
</reference>
<evidence type="ECO:0000250" key="1"/>
<evidence type="ECO:0000305" key="2"/>
<evidence type="ECO:0007829" key="3">
    <source>
        <dbReference type="PDB" id="3TM0"/>
    </source>
</evidence>
<keyword id="KW-0002">3D-structure</keyword>
<keyword id="KW-0046">Antibiotic resistance</keyword>
<keyword id="KW-0067">ATP-binding</keyword>
<keyword id="KW-0418">Kinase</keyword>
<keyword id="KW-0547">Nucleotide-binding</keyword>
<keyword id="KW-0614">Plasmid</keyword>
<keyword id="KW-0808">Transferase</keyword>
<sequence>MAKMRISPELKKLIEKYRCVKDTEGMSPAKVYKLVGENENLYLKMTDSRYKGTTYDVEREKDMMLWLEGKLPVPKVLHFERHDGWSNLLMSEADGVLCSEEYEDEQSPEKIIELYAECIRLFHSIDISDCPYTNSLDSRLAELDYLLNNDLADVDCENWEEDTPFKDPRELYDFLKTEKPEEELVFSHGDLGDSNIFVKDGKVSGFIDLGRSGRADKWYDIAFCVRSIREDIGEEQYVELFFDLLGIKPDWEKIKYYILLDELF</sequence>
<feature type="chain" id="PRO_0000204805" description="Aminoglycoside 3'-phosphotransferase">
    <location>
        <begin position="1"/>
        <end position="264"/>
    </location>
</feature>
<feature type="active site" description="Proton acceptor" evidence="1">
    <location>
        <position position="190"/>
    </location>
</feature>
<feature type="helix" evidence="3">
    <location>
        <begin position="8"/>
        <end position="14"/>
    </location>
</feature>
<feature type="strand" evidence="3">
    <location>
        <begin position="17"/>
        <end position="21"/>
    </location>
</feature>
<feature type="strand" evidence="3">
    <location>
        <begin position="27"/>
        <end position="35"/>
    </location>
</feature>
<feature type="strand" evidence="3">
    <location>
        <begin position="40"/>
        <end position="46"/>
    </location>
</feature>
<feature type="helix" evidence="3">
    <location>
        <begin position="48"/>
        <end position="50"/>
    </location>
</feature>
<feature type="helix" evidence="3">
    <location>
        <begin position="57"/>
        <end position="67"/>
    </location>
</feature>
<feature type="turn" evidence="3">
    <location>
        <begin position="68"/>
        <end position="70"/>
    </location>
</feature>
<feature type="strand" evidence="3">
    <location>
        <begin position="76"/>
        <end position="82"/>
    </location>
</feature>
<feature type="strand" evidence="3">
    <location>
        <begin position="85"/>
        <end position="91"/>
    </location>
</feature>
<feature type="strand" evidence="3">
    <location>
        <begin position="94"/>
        <end position="97"/>
    </location>
</feature>
<feature type="helix" evidence="3">
    <location>
        <begin position="98"/>
        <end position="101"/>
    </location>
</feature>
<feature type="turn" evidence="3">
    <location>
        <begin position="104"/>
        <end position="106"/>
    </location>
</feature>
<feature type="helix" evidence="3">
    <location>
        <begin position="108"/>
        <end position="124"/>
    </location>
</feature>
<feature type="helix" evidence="3">
    <location>
        <begin position="136"/>
        <end position="148"/>
    </location>
</feature>
<feature type="helix" evidence="3">
    <location>
        <begin position="156"/>
        <end position="159"/>
    </location>
</feature>
<feature type="strand" evidence="3">
    <location>
        <begin position="164"/>
        <end position="167"/>
    </location>
</feature>
<feature type="helix" evidence="3">
    <location>
        <begin position="168"/>
        <end position="177"/>
    </location>
</feature>
<feature type="strand" evidence="3">
    <location>
        <begin position="184"/>
        <end position="187"/>
    </location>
</feature>
<feature type="strand" evidence="3">
    <location>
        <begin position="195"/>
        <end position="199"/>
    </location>
</feature>
<feature type="strand" evidence="3">
    <location>
        <begin position="202"/>
        <end position="206"/>
    </location>
</feature>
<feature type="strand" evidence="3">
    <location>
        <begin position="213"/>
        <end position="216"/>
    </location>
</feature>
<feature type="helix" evidence="3">
    <location>
        <begin position="218"/>
        <end position="231"/>
    </location>
</feature>
<feature type="helix" evidence="3">
    <location>
        <begin position="236"/>
        <end position="245"/>
    </location>
</feature>
<feature type="helix" evidence="3">
    <location>
        <begin position="251"/>
        <end position="260"/>
    </location>
</feature>
<feature type="helix" evidence="3">
    <location>
        <begin position="261"/>
        <end position="263"/>
    </location>
</feature>
<organism>
    <name type="scientific">Enterococcus faecalis</name>
    <name type="common">Streptococcus faecalis</name>
    <dbReference type="NCBI Taxonomy" id="1351"/>
    <lineage>
        <taxon>Bacteria</taxon>
        <taxon>Bacillati</taxon>
        <taxon>Bacillota</taxon>
        <taxon>Bacilli</taxon>
        <taxon>Lactobacillales</taxon>
        <taxon>Enterococcaceae</taxon>
        <taxon>Enterococcus</taxon>
    </lineage>
</organism>
<proteinExistence type="evidence at protein level"/>